<accession>P75318</accession>
<dbReference type="EMBL" id="U00089">
    <property type="protein sequence ID" value="AAB96024.1"/>
    <property type="molecule type" value="Genomic_DNA"/>
</dbReference>
<dbReference type="PIR" id="S73702">
    <property type="entry name" value="S73702"/>
</dbReference>
<dbReference type="STRING" id="272634.MPN_465"/>
<dbReference type="EnsemblBacteria" id="AAB96024">
    <property type="protein sequence ID" value="AAB96024"/>
    <property type="gene ID" value="MPN_465"/>
</dbReference>
<dbReference type="KEGG" id="mpn:MPN_465"/>
<dbReference type="HOGENOM" id="CLU_1600898_0_0_14"/>
<dbReference type="Proteomes" id="UP000000808">
    <property type="component" value="Chromosome"/>
</dbReference>
<dbReference type="GO" id="GO:0005886">
    <property type="term" value="C:plasma membrane"/>
    <property type="evidence" value="ECO:0007669"/>
    <property type="project" value="UniProtKB-SubCell"/>
</dbReference>
<keyword id="KW-1003">Cell membrane</keyword>
<keyword id="KW-0472">Membrane</keyword>
<keyword id="KW-1185">Reference proteome</keyword>
<keyword id="KW-0812">Transmembrane</keyword>
<keyword id="KW-1133">Transmembrane helix</keyword>
<feature type="chain" id="PRO_0000210683" description="Uncharacterized protein MPN_465">
    <location>
        <begin position="1"/>
        <end position="199"/>
    </location>
</feature>
<feature type="transmembrane region" description="Helical" evidence="1">
    <location>
        <begin position="41"/>
        <end position="61"/>
    </location>
</feature>
<feature type="transmembrane region" description="Helical" evidence="1">
    <location>
        <begin position="72"/>
        <end position="92"/>
    </location>
</feature>
<feature type="transmembrane region" description="Helical" evidence="1">
    <location>
        <begin position="109"/>
        <end position="129"/>
    </location>
</feature>
<feature type="transmembrane region" description="Helical" evidence="1">
    <location>
        <begin position="145"/>
        <end position="165"/>
    </location>
</feature>
<comment type="subcellular location">
    <subcellularLocation>
        <location evidence="2">Cell membrane</location>
        <topology evidence="2">Multi-pass membrane protein</topology>
    </subcellularLocation>
</comment>
<comment type="similarity">
    <text evidence="2">To M.pneumoniae MPN_037.</text>
</comment>
<protein>
    <recommendedName>
        <fullName>Uncharacterized protein MPN_465</fullName>
    </recommendedName>
</protein>
<proteinExistence type="predicted"/>
<name>Y465_MYCPN</name>
<reference key="1">
    <citation type="journal article" date="1996" name="Nucleic Acids Res.">
        <title>Complete sequence analysis of the genome of the bacterium Mycoplasma pneumoniae.</title>
        <authorList>
            <person name="Himmelreich R."/>
            <person name="Hilbert H."/>
            <person name="Plagens H."/>
            <person name="Pirkl E."/>
            <person name="Li B.-C."/>
            <person name="Herrmann R."/>
        </authorList>
    </citation>
    <scope>NUCLEOTIDE SEQUENCE [LARGE SCALE GENOMIC DNA]</scope>
    <source>
        <strain>ATCC 29342 / M129 / Subtype 1</strain>
    </source>
</reference>
<sequence length="199" mass="23170">MAFLFISNEWKYQQLIFKINCWHFCYYPKNYLGGSILSKRLFIPPSACRIDLSVFPWAFICSPWNFCSTWSSLICSPCFSTVWVSLLICSPWRSTTWTNWLICSPCFSTVWVNLLICSPWAAKVVSIFVSRWLFEFLYSLNSLRVTYSVFTGITGLLSLNCLLNLPENSTLLFSGLMMYQPEKVPFLVFFTMSWNSFSL</sequence>
<evidence type="ECO:0000255" key="1"/>
<evidence type="ECO:0000305" key="2"/>
<organism>
    <name type="scientific">Mycoplasma pneumoniae (strain ATCC 29342 / M129 / Subtype 1)</name>
    <name type="common">Mycoplasmoides pneumoniae</name>
    <dbReference type="NCBI Taxonomy" id="272634"/>
    <lineage>
        <taxon>Bacteria</taxon>
        <taxon>Bacillati</taxon>
        <taxon>Mycoplasmatota</taxon>
        <taxon>Mycoplasmoidales</taxon>
        <taxon>Mycoplasmoidaceae</taxon>
        <taxon>Mycoplasmoides</taxon>
    </lineage>
</organism>
<gene>
    <name type="ordered locus">MPN_465</name>
    <name type="ORF">MP376</name>
    <name type="ORF">P01_orf199</name>
</gene>